<gene>
    <name evidence="1" type="primary">clpP</name>
    <name type="ordered locus">Fphi_1532</name>
</gene>
<keyword id="KW-0963">Cytoplasm</keyword>
<keyword id="KW-0378">Hydrolase</keyword>
<keyword id="KW-0645">Protease</keyword>
<keyword id="KW-0720">Serine protease</keyword>
<comment type="function">
    <text evidence="1">Cleaves peptides in various proteins in a process that requires ATP hydrolysis. Has a chymotrypsin-like activity. Plays a major role in the degradation of misfolded proteins.</text>
</comment>
<comment type="catalytic activity">
    <reaction evidence="1">
        <text>Hydrolysis of proteins to small peptides in the presence of ATP and magnesium. alpha-casein is the usual test substrate. In the absence of ATP, only oligopeptides shorter than five residues are hydrolyzed (such as succinyl-Leu-Tyr-|-NHMec, and Leu-Tyr-Leu-|-Tyr-Trp, in which cleavage of the -Tyr-|-Leu- and -Tyr-|-Trp bonds also occurs).</text>
        <dbReference type="EC" id="3.4.21.92"/>
    </reaction>
</comment>
<comment type="subunit">
    <text evidence="1">Fourteen ClpP subunits assemble into 2 heptameric rings which stack back to back to give a disk-like structure with a central cavity, resembling the structure of eukaryotic proteasomes.</text>
</comment>
<comment type="subcellular location">
    <subcellularLocation>
        <location evidence="1">Cytoplasm</location>
    </subcellularLocation>
</comment>
<comment type="similarity">
    <text evidence="1">Belongs to the peptidase S14 family.</text>
</comment>
<feature type="chain" id="PRO_1000080891" description="ATP-dependent Clp protease proteolytic subunit">
    <location>
        <begin position="1"/>
        <end position="201"/>
    </location>
</feature>
<feature type="active site" description="Nucleophile" evidence="1">
    <location>
        <position position="101"/>
    </location>
</feature>
<feature type="active site" evidence="1">
    <location>
        <position position="126"/>
    </location>
</feature>
<reference key="1">
    <citation type="submission" date="2007-12" db="EMBL/GenBank/DDBJ databases">
        <title>Complete sequence of chromosome of Francisella philomiragia subsp. philomiragia ATCC 25017.</title>
        <authorList>
            <consortium name="US DOE Joint Genome Institute"/>
            <person name="Copeland A."/>
            <person name="Lucas S."/>
            <person name="Lapidus A."/>
            <person name="Barry K."/>
            <person name="Detter J.C."/>
            <person name="Glavina del Rio T."/>
            <person name="Hammon N."/>
            <person name="Israni S."/>
            <person name="Dalin E."/>
            <person name="Tice H."/>
            <person name="Pitluck S."/>
            <person name="Chain P."/>
            <person name="Malfatti S."/>
            <person name="Shin M."/>
            <person name="Vergez L."/>
            <person name="Schmutz J."/>
            <person name="Larimer F."/>
            <person name="Land M."/>
            <person name="Hauser L."/>
            <person name="Richardson P."/>
        </authorList>
    </citation>
    <scope>NUCLEOTIDE SEQUENCE [LARGE SCALE GENOMIC DNA]</scope>
    <source>
        <strain>ATCC 25017 / CCUG 19701 / FSC 153 / O#319-036</strain>
    </source>
</reference>
<proteinExistence type="inferred from homology"/>
<protein>
    <recommendedName>
        <fullName evidence="1">ATP-dependent Clp protease proteolytic subunit</fullName>
        <ecNumber evidence="1">3.4.21.92</ecNumber>
    </recommendedName>
    <alternativeName>
        <fullName evidence="1">Endopeptidase Clp</fullName>
    </alternativeName>
</protein>
<organism>
    <name type="scientific">Francisella philomiragia subsp. philomiragia (strain ATCC 25017 / CCUG 19701 / FSC 153 / O#319-036)</name>
    <dbReference type="NCBI Taxonomy" id="484022"/>
    <lineage>
        <taxon>Bacteria</taxon>
        <taxon>Pseudomonadati</taxon>
        <taxon>Pseudomonadota</taxon>
        <taxon>Gammaproteobacteria</taxon>
        <taxon>Thiotrichales</taxon>
        <taxon>Francisellaceae</taxon>
        <taxon>Francisella</taxon>
    </lineage>
</organism>
<sequence length="201" mass="22264">MITNNLVPTVIEKTAGGERAFDIYSRLLKERIVFLNGEVNDHSANLVIAQLLFLESEDPDKDIYFYINSPGGMVTAGMGVYDTMQFIKPDVNTICIGLAASMGSLLLAGGAKGKRYSLPSSQIMIHQPLGGFRGQASDIEIHAKNILRIKDRLNKVLAHHTGQDLETIVRDTDRDNFMMADEAKEYGLIDHVIESREAIIK</sequence>
<accession>B0TZA5</accession>
<dbReference type="EC" id="3.4.21.92" evidence="1"/>
<dbReference type="EMBL" id="CP000937">
    <property type="protein sequence ID" value="ABZ87758.1"/>
    <property type="molecule type" value="Genomic_DNA"/>
</dbReference>
<dbReference type="SMR" id="B0TZA5"/>
<dbReference type="MEROPS" id="S14.001"/>
<dbReference type="KEGG" id="fph:Fphi_1532"/>
<dbReference type="eggNOG" id="COG0740">
    <property type="taxonomic scope" value="Bacteria"/>
</dbReference>
<dbReference type="HOGENOM" id="CLU_058707_3_2_6"/>
<dbReference type="GO" id="GO:0005737">
    <property type="term" value="C:cytoplasm"/>
    <property type="evidence" value="ECO:0007669"/>
    <property type="project" value="UniProtKB-SubCell"/>
</dbReference>
<dbReference type="GO" id="GO:0009368">
    <property type="term" value="C:endopeptidase Clp complex"/>
    <property type="evidence" value="ECO:0007669"/>
    <property type="project" value="TreeGrafter"/>
</dbReference>
<dbReference type="GO" id="GO:0004176">
    <property type="term" value="F:ATP-dependent peptidase activity"/>
    <property type="evidence" value="ECO:0007669"/>
    <property type="project" value="InterPro"/>
</dbReference>
<dbReference type="GO" id="GO:0051117">
    <property type="term" value="F:ATPase binding"/>
    <property type="evidence" value="ECO:0007669"/>
    <property type="project" value="TreeGrafter"/>
</dbReference>
<dbReference type="GO" id="GO:0004252">
    <property type="term" value="F:serine-type endopeptidase activity"/>
    <property type="evidence" value="ECO:0007669"/>
    <property type="project" value="UniProtKB-UniRule"/>
</dbReference>
<dbReference type="GO" id="GO:0006515">
    <property type="term" value="P:protein quality control for misfolded or incompletely synthesized proteins"/>
    <property type="evidence" value="ECO:0007669"/>
    <property type="project" value="TreeGrafter"/>
</dbReference>
<dbReference type="CDD" id="cd07017">
    <property type="entry name" value="S14_ClpP_2"/>
    <property type="match status" value="1"/>
</dbReference>
<dbReference type="FunFam" id="3.90.226.10:FF:000001">
    <property type="entry name" value="ATP-dependent Clp protease proteolytic subunit"/>
    <property type="match status" value="1"/>
</dbReference>
<dbReference type="Gene3D" id="3.90.226.10">
    <property type="entry name" value="2-enoyl-CoA Hydratase, Chain A, domain 1"/>
    <property type="match status" value="1"/>
</dbReference>
<dbReference type="HAMAP" id="MF_00444">
    <property type="entry name" value="ClpP"/>
    <property type="match status" value="1"/>
</dbReference>
<dbReference type="InterPro" id="IPR001907">
    <property type="entry name" value="ClpP"/>
</dbReference>
<dbReference type="InterPro" id="IPR029045">
    <property type="entry name" value="ClpP/crotonase-like_dom_sf"/>
</dbReference>
<dbReference type="InterPro" id="IPR023562">
    <property type="entry name" value="ClpP/TepA"/>
</dbReference>
<dbReference type="InterPro" id="IPR033135">
    <property type="entry name" value="ClpP_His_AS"/>
</dbReference>
<dbReference type="InterPro" id="IPR018215">
    <property type="entry name" value="ClpP_Ser_AS"/>
</dbReference>
<dbReference type="NCBIfam" id="TIGR00493">
    <property type="entry name" value="clpP"/>
    <property type="match status" value="1"/>
</dbReference>
<dbReference type="NCBIfam" id="NF001368">
    <property type="entry name" value="PRK00277.1"/>
    <property type="match status" value="1"/>
</dbReference>
<dbReference type="NCBIfam" id="NF009205">
    <property type="entry name" value="PRK12553.1"/>
    <property type="match status" value="1"/>
</dbReference>
<dbReference type="PANTHER" id="PTHR10381">
    <property type="entry name" value="ATP-DEPENDENT CLP PROTEASE PROTEOLYTIC SUBUNIT"/>
    <property type="match status" value="1"/>
</dbReference>
<dbReference type="PANTHER" id="PTHR10381:SF70">
    <property type="entry name" value="ATP-DEPENDENT CLP PROTEASE PROTEOLYTIC SUBUNIT"/>
    <property type="match status" value="1"/>
</dbReference>
<dbReference type="Pfam" id="PF00574">
    <property type="entry name" value="CLP_protease"/>
    <property type="match status" value="1"/>
</dbReference>
<dbReference type="PRINTS" id="PR00127">
    <property type="entry name" value="CLPPROTEASEP"/>
</dbReference>
<dbReference type="SUPFAM" id="SSF52096">
    <property type="entry name" value="ClpP/crotonase"/>
    <property type="match status" value="1"/>
</dbReference>
<dbReference type="PROSITE" id="PS00382">
    <property type="entry name" value="CLP_PROTEASE_HIS"/>
    <property type="match status" value="1"/>
</dbReference>
<dbReference type="PROSITE" id="PS00381">
    <property type="entry name" value="CLP_PROTEASE_SER"/>
    <property type="match status" value="1"/>
</dbReference>
<name>CLPP_FRAP2</name>
<evidence type="ECO:0000255" key="1">
    <source>
        <dbReference type="HAMAP-Rule" id="MF_00444"/>
    </source>
</evidence>